<organism>
    <name type="scientific">Shewanella piezotolerans (strain WP3 / JCM 13877)</name>
    <dbReference type="NCBI Taxonomy" id="225849"/>
    <lineage>
        <taxon>Bacteria</taxon>
        <taxon>Pseudomonadati</taxon>
        <taxon>Pseudomonadota</taxon>
        <taxon>Gammaproteobacteria</taxon>
        <taxon>Alteromonadales</taxon>
        <taxon>Shewanellaceae</taxon>
        <taxon>Shewanella</taxon>
    </lineage>
</organism>
<gene>
    <name evidence="1" type="primary">gmhA</name>
    <name type="ordered locus">swp_2079</name>
</gene>
<accession>B8CNK0</accession>
<name>GMHA_SHEPW</name>
<feature type="chain" id="PRO_1000197023" description="Phosphoheptose isomerase">
    <location>
        <begin position="1"/>
        <end position="197"/>
    </location>
</feature>
<feature type="domain" description="SIS" evidence="1">
    <location>
        <begin position="34"/>
        <end position="196"/>
    </location>
</feature>
<feature type="binding site" evidence="1">
    <location>
        <begin position="49"/>
        <end position="51"/>
    </location>
    <ligand>
        <name>substrate</name>
    </ligand>
</feature>
<feature type="binding site" evidence="1">
    <location>
        <position position="58"/>
    </location>
    <ligand>
        <name>Zn(2+)</name>
        <dbReference type="ChEBI" id="CHEBI:29105"/>
    </ligand>
</feature>
<feature type="binding site" evidence="1">
    <location>
        <position position="62"/>
    </location>
    <ligand>
        <name>substrate</name>
    </ligand>
</feature>
<feature type="binding site" evidence="1">
    <location>
        <position position="62"/>
    </location>
    <ligand>
        <name>Zn(2+)</name>
        <dbReference type="ChEBI" id="CHEBI:29105"/>
    </ligand>
</feature>
<feature type="binding site" evidence="1">
    <location>
        <begin position="91"/>
        <end position="92"/>
    </location>
    <ligand>
        <name>substrate</name>
    </ligand>
</feature>
<feature type="binding site" evidence="1">
    <location>
        <begin position="117"/>
        <end position="119"/>
    </location>
    <ligand>
        <name>substrate</name>
    </ligand>
</feature>
<feature type="binding site" evidence="1">
    <location>
        <position position="122"/>
    </location>
    <ligand>
        <name>substrate</name>
    </ligand>
</feature>
<feature type="binding site" evidence="1">
    <location>
        <position position="172"/>
    </location>
    <ligand>
        <name>substrate</name>
    </ligand>
</feature>
<feature type="binding site" evidence="1">
    <location>
        <position position="172"/>
    </location>
    <ligand>
        <name>Zn(2+)</name>
        <dbReference type="ChEBI" id="CHEBI:29105"/>
    </ligand>
</feature>
<feature type="binding site" evidence="1">
    <location>
        <position position="180"/>
    </location>
    <ligand>
        <name>Zn(2+)</name>
        <dbReference type="ChEBI" id="CHEBI:29105"/>
    </ligand>
</feature>
<comment type="function">
    <text evidence="1">Catalyzes the isomerization of sedoheptulose 7-phosphate in D-glycero-D-manno-heptose 7-phosphate.</text>
</comment>
<comment type="catalytic activity">
    <reaction evidence="1">
        <text>2 D-sedoheptulose 7-phosphate = D-glycero-alpha-D-manno-heptose 7-phosphate + D-glycero-beta-D-manno-heptose 7-phosphate</text>
        <dbReference type="Rhea" id="RHEA:27489"/>
        <dbReference type="ChEBI" id="CHEBI:57483"/>
        <dbReference type="ChEBI" id="CHEBI:60203"/>
        <dbReference type="ChEBI" id="CHEBI:60204"/>
        <dbReference type="EC" id="5.3.1.28"/>
    </reaction>
</comment>
<comment type="cofactor">
    <cofactor evidence="1">
        <name>Zn(2+)</name>
        <dbReference type="ChEBI" id="CHEBI:29105"/>
    </cofactor>
    <text evidence="1">Binds 1 zinc ion per subunit.</text>
</comment>
<comment type="pathway">
    <text evidence="1">Carbohydrate biosynthesis; D-glycero-D-manno-heptose 7-phosphate biosynthesis; D-glycero-alpha-D-manno-heptose 7-phosphate and D-glycero-beta-D-manno-heptose 7-phosphate from sedoheptulose 7-phosphate: step 1/1.</text>
</comment>
<comment type="subunit">
    <text evidence="1">Homotetramer.</text>
</comment>
<comment type="subcellular location">
    <subcellularLocation>
        <location evidence="1">Cytoplasm</location>
    </subcellularLocation>
</comment>
<comment type="miscellaneous">
    <text evidence="1">The reaction produces a racemic mixture of D-glycero-alpha-D-manno-heptose 7-phosphate and D-glycero-beta-D-manno-heptose 7-phosphate.</text>
</comment>
<comment type="similarity">
    <text evidence="1">Belongs to the SIS family. GmhA subfamily.</text>
</comment>
<protein>
    <recommendedName>
        <fullName evidence="1">Phosphoheptose isomerase</fullName>
        <ecNumber evidence="1">5.3.1.28</ecNumber>
    </recommendedName>
    <alternativeName>
        <fullName evidence="1">Sedoheptulose 7-phosphate isomerase</fullName>
    </alternativeName>
</protein>
<reference key="1">
    <citation type="journal article" date="2008" name="PLoS ONE">
        <title>Environmental adaptation: genomic analysis of the piezotolerant and psychrotolerant deep-sea iron reducing bacterium Shewanella piezotolerans WP3.</title>
        <authorList>
            <person name="Wang F."/>
            <person name="Wang J."/>
            <person name="Jian H."/>
            <person name="Zhang B."/>
            <person name="Li S."/>
            <person name="Wang F."/>
            <person name="Zeng X."/>
            <person name="Gao L."/>
            <person name="Bartlett D.H."/>
            <person name="Yu J."/>
            <person name="Hu S."/>
            <person name="Xiao X."/>
        </authorList>
    </citation>
    <scope>NUCLEOTIDE SEQUENCE [LARGE SCALE GENOMIC DNA]</scope>
    <source>
        <strain>WP3 / JCM 13877</strain>
    </source>
</reference>
<keyword id="KW-0119">Carbohydrate metabolism</keyword>
<keyword id="KW-0963">Cytoplasm</keyword>
<keyword id="KW-0413">Isomerase</keyword>
<keyword id="KW-0479">Metal-binding</keyword>
<keyword id="KW-0862">Zinc</keyword>
<dbReference type="EC" id="5.3.1.28" evidence="1"/>
<dbReference type="EMBL" id="CP000472">
    <property type="protein sequence ID" value="ACJ28834.1"/>
    <property type="molecule type" value="Genomic_DNA"/>
</dbReference>
<dbReference type="RefSeq" id="WP_020912196.1">
    <property type="nucleotide sequence ID" value="NC_011566.1"/>
</dbReference>
<dbReference type="SMR" id="B8CNK0"/>
<dbReference type="STRING" id="225849.swp_2079"/>
<dbReference type="KEGG" id="swp:swp_2079"/>
<dbReference type="eggNOG" id="COG0279">
    <property type="taxonomic scope" value="Bacteria"/>
</dbReference>
<dbReference type="HOGENOM" id="CLU_080999_3_1_6"/>
<dbReference type="OrthoDB" id="9810929at2"/>
<dbReference type="UniPathway" id="UPA00041">
    <property type="reaction ID" value="UER00436"/>
</dbReference>
<dbReference type="Proteomes" id="UP000000753">
    <property type="component" value="Chromosome"/>
</dbReference>
<dbReference type="GO" id="GO:0005737">
    <property type="term" value="C:cytoplasm"/>
    <property type="evidence" value="ECO:0007669"/>
    <property type="project" value="UniProtKB-SubCell"/>
</dbReference>
<dbReference type="GO" id="GO:0097367">
    <property type="term" value="F:carbohydrate derivative binding"/>
    <property type="evidence" value="ECO:0007669"/>
    <property type="project" value="InterPro"/>
</dbReference>
<dbReference type="GO" id="GO:0008968">
    <property type="term" value="F:D-sedoheptulose 7-phosphate isomerase activity"/>
    <property type="evidence" value="ECO:0007669"/>
    <property type="project" value="UniProtKB-UniRule"/>
</dbReference>
<dbReference type="GO" id="GO:0008270">
    <property type="term" value="F:zinc ion binding"/>
    <property type="evidence" value="ECO:0007669"/>
    <property type="project" value="UniProtKB-UniRule"/>
</dbReference>
<dbReference type="GO" id="GO:0005975">
    <property type="term" value="P:carbohydrate metabolic process"/>
    <property type="evidence" value="ECO:0007669"/>
    <property type="project" value="UniProtKB-UniRule"/>
</dbReference>
<dbReference type="GO" id="GO:2001061">
    <property type="term" value="P:D-glycero-D-manno-heptose 7-phosphate biosynthetic process"/>
    <property type="evidence" value="ECO:0007669"/>
    <property type="project" value="UniProtKB-UniPathway"/>
</dbReference>
<dbReference type="CDD" id="cd05006">
    <property type="entry name" value="SIS_GmhA"/>
    <property type="match status" value="1"/>
</dbReference>
<dbReference type="Gene3D" id="3.40.50.10490">
    <property type="entry name" value="Glucose-6-phosphate isomerase like protein, domain 1"/>
    <property type="match status" value="1"/>
</dbReference>
<dbReference type="HAMAP" id="MF_00067">
    <property type="entry name" value="GmhA"/>
    <property type="match status" value="1"/>
</dbReference>
<dbReference type="InterPro" id="IPR035461">
    <property type="entry name" value="GmhA/DiaA"/>
</dbReference>
<dbReference type="InterPro" id="IPR004515">
    <property type="entry name" value="Phosphoheptose_Isoase"/>
</dbReference>
<dbReference type="InterPro" id="IPR001347">
    <property type="entry name" value="SIS_dom"/>
</dbReference>
<dbReference type="InterPro" id="IPR046348">
    <property type="entry name" value="SIS_dom_sf"/>
</dbReference>
<dbReference type="InterPro" id="IPR050099">
    <property type="entry name" value="SIS_GmhA/DiaA_subfam"/>
</dbReference>
<dbReference type="NCBIfam" id="NF010546">
    <property type="entry name" value="PRK13936.1"/>
    <property type="match status" value="1"/>
</dbReference>
<dbReference type="PANTHER" id="PTHR30390:SF6">
    <property type="entry name" value="DNAA INITIATOR-ASSOCIATING PROTEIN DIAA"/>
    <property type="match status" value="1"/>
</dbReference>
<dbReference type="PANTHER" id="PTHR30390">
    <property type="entry name" value="SEDOHEPTULOSE 7-PHOSPHATE ISOMERASE / DNAA INITIATOR-ASSOCIATING FACTOR FOR REPLICATION INITIATION"/>
    <property type="match status" value="1"/>
</dbReference>
<dbReference type="Pfam" id="PF13580">
    <property type="entry name" value="SIS_2"/>
    <property type="match status" value="1"/>
</dbReference>
<dbReference type="SUPFAM" id="SSF53697">
    <property type="entry name" value="SIS domain"/>
    <property type="match status" value="1"/>
</dbReference>
<dbReference type="PROSITE" id="PS51464">
    <property type="entry name" value="SIS"/>
    <property type="match status" value="1"/>
</dbReference>
<evidence type="ECO:0000255" key="1">
    <source>
        <dbReference type="HAMAP-Rule" id="MF_00067"/>
    </source>
</evidence>
<proteinExistence type="inferred from homology"/>
<sequence>MLERIKDSFTESIQTKIDASEALPESIAKAAEMMVQCLLGGNKILACGNGGSAGDAQHFSAELLNRYEIERPPLPAIALSCDTSTITAIANDYSYDEIYSKQIMALGQPGDILLAISTSGNSGNVIKAMEAALSRDMTIVSLTGKDGGAMAGLLSVNDVEIRVPSNVTARIQEVHLLAIHCLCDNIDRTLFPQDEQA</sequence>